<name>YQGF_PARXL</name>
<proteinExistence type="inferred from homology"/>
<sequence>MSLAAGREATLLAFDYGEKRIGVAVGNSLTKSARPLVIVQNRSREYRFEAVGKLIAEWKPNALVVGLPMHPDGTPHEMTQLAKRFGNQLNGRFNLPVTWIDERYSSVEAKAEIRAGNGRADMLDAEAASIILQQYLDGLSDDHEFH</sequence>
<protein>
    <recommendedName>
        <fullName evidence="1">Putative pre-16S rRNA nuclease</fullName>
        <ecNumber evidence="1">3.1.-.-</ecNumber>
    </recommendedName>
</protein>
<keyword id="KW-0963">Cytoplasm</keyword>
<keyword id="KW-0378">Hydrolase</keyword>
<keyword id="KW-0540">Nuclease</keyword>
<keyword id="KW-1185">Reference proteome</keyword>
<keyword id="KW-0690">Ribosome biogenesis</keyword>
<gene>
    <name type="ordered locus">Bxeno_A0650</name>
    <name type="ORF">Bxe_A3810</name>
</gene>
<accession>Q144Q1</accession>
<reference key="1">
    <citation type="journal article" date="2006" name="Proc. Natl. Acad. Sci. U.S.A.">
        <title>Burkholderia xenovorans LB400 harbors a multi-replicon, 9.73-Mbp genome shaped for versatility.</title>
        <authorList>
            <person name="Chain P.S.G."/>
            <person name="Denef V.J."/>
            <person name="Konstantinidis K.T."/>
            <person name="Vergez L.M."/>
            <person name="Agullo L."/>
            <person name="Reyes V.L."/>
            <person name="Hauser L."/>
            <person name="Cordova M."/>
            <person name="Gomez L."/>
            <person name="Gonzalez M."/>
            <person name="Land M."/>
            <person name="Lao V."/>
            <person name="Larimer F."/>
            <person name="LiPuma J.J."/>
            <person name="Mahenthiralingam E."/>
            <person name="Malfatti S.A."/>
            <person name="Marx C.J."/>
            <person name="Parnell J.J."/>
            <person name="Ramette A."/>
            <person name="Richardson P."/>
            <person name="Seeger M."/>
            <person name="Smith D."/>
            <person name="Spilker T."/>
            <person name="Sul W.J."/>
            <person name="Tsoi T.V."/>
            <person name="Ulrich L.E."/>
            <person name="Zhulin I.B."/>
            <person name="Tiedje J.M."/>
        </authorList>
    </citation>
    <scope>NUCLEOTIDE SEQUENCE [LARGE SCALE GENOMIC DNA]</scope>
    <source>
        <strain>LB400</strain>
    </source>
</reference>
<evidence type="ECO:0000255" key="1">
    <source>
        <dbReference type="HAMAP-Rule" id="MF_00651"/>
    </source>
</evidence>
<organism>
    <name type="scientific">Paraburkholderia xenovorans (strain LB400)</name>
    <dbReference type="NCBI Taxonomy" id="266265"/>
    <lineage>
        <taxon>Bacteria</taxon>
        <taxon>Pseudomonadati</taxon>
        <taxon>Pseudomonadota</taxon>
        <taxon>Betaproteobacteria</taxon>
        <taxon>Burkholderiales</taxon>
        <taxon>Burkholderiaceae</taxon>
        <taxon>Paraburkholderia</taxon>
    </lineage>
</organism>
<dbReference type="EC" id="3.1.-.-" evidence="1"/>
<dbReference type="EMBL" id="CP000270">
    <property type="protein sequence ID" value="ABE29188.1"/>
    <property type="molecule type" value="Genomic_DNA"/>
</dbReference>
<dbReference type="RefSeq" id="WP_007178989.1">
    <property type="nucleotide sequence ID" value="NC_007951.1"/>
</dbReference>
<dbReference type="SMR" id="Q144Q1"/>
<dbReference type="STRING" id="266265.Bxe_A3810"/>
<dbReference type="KEGG" id="bxb:DR64_1487"/>
<dbReference type="KEGG" id="bxe:Bxe_A3810"/>
<dbReference type="eggNOG" id="COG0816">
    <property type="taxonomic scope" value="Bacteria"/>
</dbReference>
<dbReference type="OrthoDB" id="9796140at2"/>
<dbReference type="Proteomes" id="UP000001817">
    <property type="component" value="Chromosome 1"/>
</dbReference>
<dbReference type="GO" id="GO:0005829">
    <property type="term" value="C:cytosol"/>
    <property type="evidence" value="ECO:0007669"/>
    <property type="project" value="TreeGrafter"/>
</dbReference>
<dbReference type="GO" id="GO:0004518">
    <property type="term" value="F:nuclease activity"/>
    <property type="evidence" value="ECO:0007669"/>
    <property type="project" value="UniProtKB-KW"/>
</dbReference>
<dbReference type="GO" id="GO:0000967">
    <property type="term" value="P:rRNA 5'-end processing"/>
    <property type="evidence" value="ECO:0007669"/>
    <property type="project" value="UniProtKB-UniRule"/>
</dbReference>
<dbReference type="CDD" id="cd16964">
    <property type="entry name" value="YqgF"/>
    <property type="match status" value="1"/>
</dbReference>
<dbReference type="Gene3D" id="3.30.420.140">
    <property type="entry name" value="YqgF/RNase H-like domain"/>
    <property type="match status" value="1"/>
</dbReference>
<dbReference type="HAMAP" id="MF_00651">
    <property type="entry name" value="Nuclease_YqgF"/>
    <property type="match status" value="1"/>
</dbReference>
<dbReference type="InterPro" id="IPR012337">
    <property type="entry name" value="RNaseH-like_sf"/>
</dbReference>
<dbReference type="InterPro" id="IPR005227">
    <property type="entry name" value="YqgF"/>
</dbReference>
<dbReference type="InterPro" id="IPR006641">
    <property type="entry name" value="YqgF/RNaseH-like_dom"/>
</dbReference>
<dbReference type="InterPro" id="IPR037027">
    <property type="entry name" value="YqgF/RNaseH-like_dom_sf"/>
</dbReference>
<dbReference type="NCBIfam" id="TIGR00250">
    <property type="entry name" value="RNAse_H_YqgF"/>
    <property type="match status" value="1"/>
</dbReference>
<dbReference type="PANTHER" id="PTHR33317">
    <property type="entry name" value="POLYNUCLEOTIDYL TRANSFERASE, RIBONUCLEASE H-LIKE SUPERFAMILY PROTEIN"/>
    <property type="match status" value="1"/>
</dbReference>
<dbReference type="PANTHER" id="PTHR33317:SF4">
    <property type="entry name" value="POLYNUCLEOTIDYL TRANSFERASE, RIBONUCLEASE H-LIKE SUPERFAMILY PROTEIN"/>
    <property type="match status" value="1"/>
</dbReference>
<dbReference type="Pfam" id="PF03652">
    <property type="entry name" value="RuvX"/>
    <property type="match status" value="1"/>
</dbReference>
<dbReference type="SMART" id="SM00732">
    <property type="entry name" value="YqgFc"/>
    <property type="match status" value="1"/>
</dbReference>
<dbReference type="SUPFAM" id="SSF53098">
    <property type="entry name" value="Ribonuclease H-like"/>
    <property type="match status" value="1"/>
</dbReference>
<comment type="function">
    <text evidence="1">Could be a nuclease involved in processing of the 5'-end of pre-16S rRNA.</text>
</comment>
<comment type="subcellular location">
    <subcellularLocation>
        <location evidence="1">Cytoplasm</location>
    </subcellularLocation>
</comment>
<comment type="similarity">
    <text evidence="1">Belongs to the YqgF nuclease family.</text>
</comment>
<feature type="chain" id="PRO_0000257513" description="Putative pre-16S rRNA nuclease">
    <location>
        <begin position="1"/>
        <end position="146"/>
    </location>
</feature>